<name>4HYPE_BRUSI</name>
<gene>
    <name type="ordered locus">BSUIS_B1268</name>
</gene>
<protein>
    <recommendedName>
        <fullName>4-hydroxyproline epimerase</fullName>
        <ecNumber>5.1.1.8</ecNumber>
    </recommendedName>
    <alternativeName>
        <fullName>Hydroxyproline-2-epimerase</fullName>
        <shortName>HyPRE</shortName>
    </alternativeName>
</protein>
<evidence type="ECO:0000250" key="1"/>
<evidence type="ECO:0000250" key="2">
    <source>
        <dbReference type="UniProtKB" id="Q4KGU2"/>
    </source>
</evidence>
<evidence type="ECO:0000305" key="3"/>
<sequence>MARHSFFCVDGHTCGNPVRLVAGGGPNLNGSTMMEKRAHFLAEYDWIRTGLMFEPRGHDMMSGSILYPPTRPDCDVAVLFIETSGCLPMCGHGTIGTVTMAIEQGLVTPKTPGKLNLDTPAGLVAIEYEQDGQYVERVRLTNVPAFLYAEGLEVECPDLGPIKVDVAYGGNFYAIVEPQENYTDMDDYSALQLIAWSPVLRQRLNEKYKFQHPELPDINRLSHILWTGKPEHPQAHARNAVFYGDKAIDRSPCGTGTSARMAQLAAKGKLKPGDEFIHESIIGSLFHGRVERAAEVAGRPAIVPSIAGWARMTGYNTIFIDDRDPFAHGFSVA</sequence>
<organism>
    <name type="scientific">Brucella suis (strain ATCC 23445 / NCTC 10510)</name>
    <dbReference type="NCBI Taxonomy" id="470137"/>
    <lineage>
        <taxon>Bacteria</taxon>
        <taxon>Pseudomonadati</taxon>
        <taxon>Pseudomonadota</taxon>
        <taxon>Alphaproteobacteria</taxon>
        <taxon>Hyphomicrobiales</taxon>
        <taxon>Brucellaceae</taxon>
        <taxon>Brucella/Ochrobactrum group</taxon>
        <taxon>Brucella</taxon>
    </lineage>
</organism>
<dbReference type="EC" id="5.1.1.8"/>
<dbReference type="EMBL" id="CP000912">
    <property type="protein sequence ID" value="ABY40201.1"/>
    <property type="molecule type" value="Genomic_DNA"/>
</dbReference>
<dbReference type="RefSeq" id="WP_006074544.1">
    <property type="nucleotide sequence ID" value="NC_010167.1"/>
</dbReference>
<dbReference type="SMR" id="A9WWR5"/>
<dbReference type="KEGG" id="bmt:BSUIS_B1268"/>
<dbReference type="HOGENOM" id="CLU_036729_0_0_5"/>
<dbReference type="Proteomes" id="UP000008545">
    <property type="component" value="Chromosome II"/>
</dbReference>
<dbReference type="GO" id="GO:0047580">
    <property type="term" value="F:4-hydroxyproline epimerase activity"/>
    <property type="evidence" value="ECO:0007669"/>
    <property type="project" value="UniProtKB-EC"/>
</dbReference>
<dbReference type="FunFam" id="3.10.310.10:FF:000005">
    <property type="entry name" value="Proline racemase"/>
    <property type="match status" value="1"/>
</dbReference>
<dbReference type="Gene3D" id="3.10.310.10">
    <property type="entry name" value="Diaminopimelate Epimerase, Chain A, domain 1"/>
    <property type="match status" value="2"/>
</dbReference>
<dbReference type="InterPro" id="IPR008794">
    <property type="entry name" value="Pro_racemase_fam"/>
</dbReference>
<dbReference type="NCBIfam" id="NF010578">
    <property type="entry name" value="PRK13971.1"/>
    <property type="match status" value="1"/>
</dbReference>
<dbReference type="PANTHER" id="PTHR33442">
    <property type="entry name" value="TRANS-3-HYDROXY-L-PROLINE DEHYDRATASE"/>
    <property type="match status" value="1"/>
</dbReference>
<dbReference type="PANTHER" id="PTHR33442:SF1">
    <property type="entry name" value="TRANS-3-HYDROXY-L-PROLINE DEHYDRATASE"/>
    <property type="match status" value="1"/>
</dbReference>
<dbReference type="Pfam" id="PF05544">
    <property type="entry name" value="Pro_racemase"/>
    <property type="match status" value="1"/>
</dbReference>
<dbReference type="PIRSF" id="PIRSF029792">
    <property type="entry name" value="Pro_racemase"/>
    <property type="match status" value="1"/>
</dbReference>
<dbReference type="SFLD" id="SFLDS00028">
    <property type="entry name" value="Proline_Racemase"/>
    <property type="match status" value="1"/>
</dbReference>
<dbReference type="SUPFAM" id="SSF54506">
    <property type="entry name" value="Diaminopimelate epimerase-like"/>
    <property type="match status" value="1"/>
</dbReference>
<proteinExistence type="inferred from homology"/>
<keyword id="KW-0413">Isomerase</keyword>
<feature type="chain" id="PRO_0000354031" description="4-hydroxyproline epimerase">
    <location>
        <begin position="1"/>
        <end position="333"/>
    </location>
</feature>
<feature type="active site" description="Proton acceptor" evidence="2">
    <location>
        <position position="90"/>
    </location>
</feature>
<feature type="active site" description="Proton donor" evidence="2">
    <location>
        <position position="253"/>
    </location>
</feature>
<feature type="binding site" evidence="2">
    <location>
        <begin position="91"/>
        <end position="92"/>
    </location>
    <ligand>
        <name>substrate</name>
    </ligand>
</feature>
<feature type="binding site" evidence="2">
    <location>
        <position position="249"/>
    </location>
    <ligand>
        <name>substrate</name>
    </ligand>
</feature>
<feature type="binding site" evidence="2">
    <location>
        <begin position="254"/>
        <end position="255"/>
    </location>
    <ligand>
        <name>substrate</name>
    </ligand>
</feature>
<accession>A9WWR5</accession>
<reference key="1">
    <citation type="submission" date="2007-12" db="EMBL/GenBank/DDBJ databases">
        <title>Brucella suis ATCC 23445 whole genome shotgun sequencing project.</title>
        <authorList>
            <person name="Setubal J.C."/>
            <person name="Bowns C."/>
            <person name="Boyle S."/>
            <person name="Crasta O.R."/>
            <person name="Czar M.J."/>
            <person name="Dharmanolla C."/>
            <person name="Gillespie J.J."/>
            <person name="Kenyon R.W."/>
            <person name="Lu J."/>
            <person name="Mane S."/>
            <person name="Mohapatra S."/>
            <person name="Nagrani S."/>
            <person name="Purkayastha A."/>
            <person name="Rajasimha H.K."/>
            <person name="Shallom J.M."/>
            <person name="Shallom S."/>
            <person name="Shukla M."/>
            <person name="Snyder E.E."/>
            <person name="Sobral B.W."/>
            <person name="Wattam A.R."/>
            <person name="Will R."/>
            <person name="Williams K."/>
            <person name="Yoo H."/>
            <person name="Bruce D."/>
            <person name="Detter C."/>
            <person name="Munk C."/>
            <person name="Brettin T.S."/>
        </authorList>
    </citation>
    <scope>NUCLEOTIDE SEQUENCE [LARGE SCALE GENOMIC DNA]</scope>
    <source>
        <strain>ATCC 23445 / NCTC 10510</strain>
    </source>
</reference>
<comment type="function">
    <text evidence="1">Allows intracellular utilization of 4-hydroxyproline, one of the major constituents of host collagen, by converting 4-hydroxy-L-proline to 4-hydroxy-D-proline, which can be further metabolized by intracellular 4-hydroxy-D-proline oxidases. Strong B-cell mitogen. Plays an important role in the regulation of intra- and extracellular amino acid pools, allowing the bacterium to profit from host precursors and enzymatic pathways (By similarity).</text>
</comment>
<comment type="catalytic activity">
    <reaction>
        <text>trans-4-hydroxy-L-proline = cis-4-hydroxy-D-proline</text>
        <dbReference type="Rhea" id="RHEA:21152"/>
        <dbReference type="ChEBI" id="CHEBI:57690"/>
        <dbReference type="ChEBI" id="CHEBI:58375"/>
        <dbReference type="EC" id="5.1.1.8"/>
    </reaction>
</comment>
<comment type="subunit">
    <text evidence="1">Homodimer.</text>
</comment>
<comment type="similarity">
    <text evidence="3">Belongs to the proline racemase family.</text>
</comment>